<name>SYA_CHLPD</name>
<dbReference type="EC" id="6.1.1.7" evidence="1"/>
<dbReference type="EMBL" id="CP000492">
    <property type="protein sequence ID" value="ABL64310.1"/>
    <property type="molecule type" value="Genomic_DNA"/>
</dbReference>
<dbReference type="RefSeq" id="WP_011744150.1">
    <property type="nucleotide sequence ID" value="NC_008639.1"/>
</dbReference>
<dbReference type="SMR" id="A1BD33"/>
<dbReference type="STRING" id="290317.Cpha266_0243"/>
<dbReference type="KEGG" id="cph:Cpha266_0243"/>
<dbReference type="eggNOG" id="COG0013">
    <property type="taxonomic scope" value="Bacteria"/>
</dbReference>
<dbReference type="HOGENOM" id="CLU_004485_1_1_10"/>
<dbReference type="OrthoDB" id="9803884at2"/>
<dbReference type="Proteomes" id="UP000008701">
    <property type="component" value="Chromosome"/>
</dbReference>
<dbReference type="GO" id="GO:0005737">
    <property type="term" value="C:cytoplasm"/>
    <property type="evidence" value="ECO:0007669"/>
    <property type="project" value="UniProtKB-SubCell"/>
</dbReference>
<dbReference type="GO" id="GO:0004813">
    <property type="term" value="F:alanine-tRNA ligase activity"/>
    <property type="evidence" value="ECO:0007669"/>
    <property type="project" value="UniProtKB-UniRule"/>
</dbReference>
<dbReference type="GO" id="GO:0002161">
    <property type="term" value="F:aminoacyl-tRNA deacylase activity"/>
    <property type="evidence" value="ECO:0007669"/>
    <property type="project" value="TreeGrafter"/>
</dbReference>
<dbReference type="GO" id="GO:0005524">
    <property type="term" value="F:ATP binding"/>
    <property type="evidence" value="ECO:0007669"/>
    <property type="project" value="UniProtKB-UniRule"/>
</dbReference>
<dbReference type="GO" id="GO:0000049">
    <property type="term" value="F:tRNA binding"/>
    <property type="evidence" value="ECO:0007669"/>
    <property type="project" value="UniProtKB-KW"/>
</dbReference>
<dbReference type="GO" id="GO:0008270">
    <property type="term" value="F:zinc ion binding"/>
    <property type="evidence" value="ECO:0007669"/>
    <property type="project" value="UniProtKB-UniRule"/>
</dbReference>
<dbReference type="GO" id="GO:0006419">
    <property type="term" value="P:alanyl-tRNA aminoacylation"/>
    <property type="evidence" value="ECO:0007669"/>
    <property type="project" value="UniProtKB-UniRule"/>
</dbReference>
<dbReference type="CDD" id="cd00673">
    <property type="entry name" value="AlaRS_core"/>
    <property type="match status" value="1"/>
</dbReference>
<dbReference type="FunFam" id="3.10.310.40:FF:000001">
    <property type="entry name" value="Alanine--tRNA ligase"/>
    <property type="match status" value="1"/>
</dbReference>
<dbReference type="FunFam" id="3.30.930.10:FF:000004">
    <property type="entry name" value="Alanine--tRNA ligase"/>
    <property type="match status" value="1"/>
</dbReference>
<dbReference type="FunFam" id="3.30.980.10:FF:000004">
    <property type="entry name" value="Alanine--tRNA ligase, cytoplasmic"/>
    <property type="match status" value="1"/>
</dbReference>
<dbReference type="Gene3D" id="2.40.30.130">
    <property type="match status" value="1"/>
</dbReference>
<dbReference type="Gene3D" id="3.10.310.40">
    <property type="match status" value="1"/>
</dbReference>
<dbReference type="Gene3D" id="3.30.54.20">
    <property type="match status" value="1"/>
</dbReference>
<dbReference type="Gene3D" id="3.30.930.10">
    <property type="entry name" value="Bira Bifunctional Protein, Domain 2"/>
    <property type="match status" value="1"/>
</dbReference>
<dbReference type="Gene3D" id="3.30.980.10">
    <property type="entry name" value="Threonyl-trna Synthetase, Chain A, domain 2"/>
    <property type="match status" value="1"/>
</dbReference>
<dbReference type="HAMAP" id="MF_00036_B">
    <property type="entry name" value="Ala_tRNA_synth_B"/>
    <property type="match status" value="1"/>
</dbReference>
<dbReference type="InterPro" id="IPR045864">
    <property type="entry name" value="aa-tRNA-synth_II/BPL/LPL"/>
</dbReference>
<dbReference type="InterPro" id="IPR002318">
    <property type="entry name" value="Ala-tRNA-lgiase_IIc"/>
</dbReference>
<dbReference type="InterPro" id="IPR018162">
    <property type="entry name" value="Ala-tRNA-ligase_IIc_anticod-bd"/>
</dbReference>
<dbReference type="InterPro" id="IPR018165">
    <property type="entry name" value="Ala-tRNA-synth_IIc_core"/>
</dbReference>
<dbReference type="InterPro" id="IPR018164">
    <property type="entry name" value="Ala-tRNA-synth_IIc_N"/>
</dbReference>
<dbReference type="InterPro" id="IPR050058">
    <property type="entry name" value="Ala-tRNA_ligase"/>
</dbReference>
<dbReference type="InterPro" id="IPR023033">
    <property type="entry name" value="Ala_tRNA_ligase_euk/bac"/>
</dbReference>
<dbReference type="InterPro" id="IPR003156">
    <property type="entry name" value="DHHA1_dom"/>
</dbReference>
<dbReference type="InterPro" id="IPR018163">
    <property type="entry name" value="Thr/Ala-tRNA-synth_IIc_edit"/>
</dbReference>
<dbReference type="InterPro" id="IPR009000">
    <property type="entry name" value="Transl_B-barrel_sf"/>
</dbReference>
<dbReference type="InterPro" id="IPR012947">
    <property type="entry name" value="tRNA_SAD"/>
</dbReference>
<dbReference type="NCBIfam" id="TIGR00344">
    <property type="entry name" value="alaS"/>
    <property type="match status" value="1"/>
</dbReference>
<dbReference type="PANTHER" id="PTHR11777:SF9">
    <property type="entry name" value="ALANINE--TRNA LIGASE, CYTOPLASMIC"/>
    <property type="match status" value="1"/>
</dbReference>
<dbReference type="PANTHER" id="PTHR11777">
    <property type="entry name" value="ALANYL-TRNA SYNTHETASE"/>
    <property type="match status" value="1"/>
</dbReference>
<dbReference type="Pfam" id="PF02272">
    <property type="entry name" value="DHHA1"/>
    <property type="match status" value="1"/>
</dbReference>
<dbReference type="Pfam" id="PF01411">
    <property type="entry name" value="tRNA-synt_2c"/>
    <property type="match status" value="1"/>
</dbReference>
<dbReference type="Pfam" id="PF07973">
    <property type="entry name" value="tRNA_SAD"/>
    <property type="match status" value="1"/>
</dbReference>
<dbReference type="PRINTS" id="PR00980">
    <property type="entry name" value="TRNASYNTHALA"/>
</dbReference>
<dbReference type="SMART" id="SM00863">
    <property type="entry name" value="tRNA_SAD"/>
    <property type="match status" value="1"/>
</dbReference>
<dbReference type="SUPFAM" id="SSF55681">
    <property type="entry name" value="Class II aaRS and biotin synthetases"/>
    <property type="match status" value="1"/>
</dbReference>
<dbReference type="SUPFAM" id="SSF101353">
    <property type="entry name" value="Putative anticodon-binding domain of alanyl-tRNA synthetase (AlaRS)"/>
    <property type="match status" value="1"/>
</dbReference>
<dbReference type="SUPFAM" id="SSF55186">
    <property type="entry name" value="ThrRS/AlaRS common domain"/>
    <property type="match status" value="1"/>
</dbReference>
<dbReference type="SUPFAM" id="SSF50447">
    <property type="entry name" value="Translation proteins"/>
    <property type="match status" value="1"/>
</dbReference>
<dbReference type="PROSITE" id="PS50860">
    <property type="entry name" value="AA_TRNA_LIGASE_II_ALA"/>
    <property type="match status" value="1"/>
</dbReference>
<comment type="function">
    <text evidence="1">Catalyzes the attachment of alanine to tRNA(Ala) in a two-step reaction: alanine is first activated by ATP to form Ala-AMP and then transferred to the acceptor end of tRNA(Ala). Also edits incorrectly charged Ser-tRNA(Ala) and Gly-tRNA(Ala) via its editing domain.</text>
</comment>
<comment type="catalytic activity">
    <reaction evidence="1">
        <text>tRNA(Ala) + L-alanine + ATP = L-alanyl-tRNA(Ala) + AMP + diphosphate</text>
        <dbReference type="Rhea" id="RHEA:12540"/>
        <dbReference type="Rhea" id="RHEA-COMP:9657"/>
        <dbReference type="Rhea" id="RHEA-COMP:9923"/>
        <dbReference type="ChEBI" id="CHEBI:30616"/>
        <dbReference type="ChEBI" id="CHEBI:33019"/>
        <dbReference type="ChEBI" id="CHEBI:57972"/>
        <dbReference type="ChEBI" id="CHEBI:78442"/>
        <dbReference type="ChEBI" id="CHEBI:78497"/>
        <dbReference type="ChEBI" id="CHEBI:456215"/>
        <dbReference type="EC" id="6.1.1.7"/>
    </reaction>
</comment>
<comment type="cofactor">
    <cofactor evidence="1">
        <name>Zn(2+)</name>
        <dbReference type="ChEBI" id="CHEBI:29105"/>
    </cofactor>
    <text evidence="1">Binds 1 zinc ion per subunit.</text>
</comment>
<comment type="subcellular location">
    <subcellularLocation>
        <location evidence="1">Cytoplasm</location>
    </subcellularLocation>
</comment>
<comment type="domain">
    <text evidence="1">Consists of three domains; the N-terminal catalytic domain, the editing domain and the C-terminal C-Ala domain. The editing domain removes incorrectly charged amino acids, while the C-Ala domain, along with tRNA(Ala), serves as a bridge to cooperatively bring together the editing and aminoacylation centers thus stimulating deacylation of misacylated tRNAs.</text>
</comment>
<comment type="similarity">
    <text evidence="1">Belongs to the class-II aminoacyl-tRNA synthetase family.</text>
</comment>
<feature type="chain" id="PRO_0000347552" description="Alanine--tRNA ligase">
    <location>
        <begin position="1"/>
        <end position="888"/>
    </location>
</feature>
<feature type="binding site" evidence="1">
    <location>
        <position position="570"/>
    </location>
    <ligand>
        <name>Zn(2+)</name>
        <dbReference type="ChEBI" id="CHEBI:29105"/>
    </ligand>
</feature>
<feature type="binding site" evidence="1">
    <location>
        <position position="574"/>
    </location>
    <ligand>
        <name>Zn(2+)</name>
        <dbReference type="ChEBI" id="CHEBI:29105"/>
    </ligand>
</feature>
<feature type="binding site" evidence="1">
    <location>
        <position position="673"/>
    </location>
    <ligand>
        <name>Zn(2+)</name>
        <dbReference type="ChEBI" id="CHEBI:29105"/>
    </ligand>
</feature>
<feature type="binding site" evidence="1">
    <location>
        <position position="677"/>
    </location>
    <ligand>
        <name>Zn(2+)</name>
        <dbReference type="ChEBI" id="CHEBI:29105"/>
    </ligand>
</feature>
<accession>A1BD33</accession>
<proteinExistence type="inferred from homology"/>
<keyword id="KW-0030">Aminoacyl-tRNA synthetase</keyword>
<keyword id="KW-0067">ATP-binding</keyword>
<keyword id="KW-0963">Cytoplasm</keyword>
<keyword id="KW-0436">Ligase</keyword>
<keyword id="KW-0479">Metal-binding</keyword>
<keyword id="KW-0547">Nucleotide-binding</keyword>
<keyword id="KW-0648">Protein biosynthesis</keyword>
<keyword id="KW-1185">Reference proteome</keyword>
<keyword id="KW-0694">RNA-binding</keyword>
<keyword id="KW-0820">tRNA-binding</keyword>
<keyword id="KW-0862">Zinc</keyword>
<evidence type="ECO:0000255" key="1">
    <source>
        <dbReference type="HAMAP-Rule" id="MF_00036"/>
    </source>
</evidence>
<organism>
    <name type="scientific">Chlorobium phaeobacteroides (strain DSM 266 / SMG 266 / 2430)</name>
    <dbReference type="NCBI Taxonomy" id="290317"/>
    <lineage>
        <taxon>Bacteria</taxon>
        <taxon>Pseudomonadati</taxon>
        <taxon>Chlorobiota</taxon>
        <taxon>Chlorobiia</taxon>
        <taxon>Chlorobiales</taxon>
        <taxon>Chlorobiaceae</taxon>
        <taxon>Chlorobium/Pelodictyon group</taxon>
        <taxon>Chlorobium</taxon>
    </lineage>
</organism>
<gene>
    <name evidence="1" type="primary">alaS</name>
    <name type="ordered locus">Cpha266_0243</name>
</gene>
<protein>
    <recommendedName>
        <fullName evidence="1">Alanine--tRNA ligase</fullName>
        <ecNumber evidence="1">6.1.1.7</ecNumber>
    </recommendedName>
    <alternativeName>
        <fullName evidence="1">Alanyl-tRNA synthetase</fullName>
        <shortName evidence="1">AlaRS</shortName>
    </alternativeName>
</protein>
<sequence>MNSREIRQSFLDFFDRKGHTIVRSAPVIPLDDPTLLFTNAGMNQFKDVFLDKGTRPYVRAADTQKCIRASGKHNDLEDVGRDTYHHTFFEMLGNWSFGDYYKKEAISWAWELLTSVWHLPKERLYATVYYDDEESYLLWQEETDIPHDHIIKFDEKDNFWEMGETGPCGPCSEIHIDLTEDGSGKPLVNAGDYRVIELWNLVFIQYNRQADGRLEPLPQKHVDTGMGFERVCAVMQGKASNYDTDVFRPLFDRITEITGVSYNASLDDPSDIAMRVLADHARTLTFALTDGAMPSNEGRGYVLRRILRRALRYSKTLGCSEPLLYRLVETLAASMGDVFPELRKQQQAVSRIIRAEEESFLATLDRGIEIFNELIAAVRSRGTTVVSGDDAFRLYDTFGFPLDLTRLMAAEAGFEVDEEGFDRCMKEQKTRARQDRRDKQHLKGDEGEWTWFSAERTSVFTGYHSLEELASITGVSIFSDRLLVVLDRTPFYAESGGQCGDRGWIETAAYRLRVSDTRKDGDMIVHLVTEVRDSVSDGAISPADLSFDEGKLACRASVDRSDRQGTERNHTATHLLHAALRRTLGQHVQQKGSFVSSERLRFDFSHFARLTSEELAIVESEVNEQIRSAEPVVKHQDIPYDEAIARGALAFFGDKYADRVRVVEIAGLSVELCGGTHVDSIGQIGLFKIVSESSVASGVRRIEALTGKAAEVLLWKEYRELQDIRQMLKLKADEEVIGRIAELADSKKELEKQLQVYRTEALSGILQRSLDAAESVGSIRFMTLRLEHVDQDSLRQAVLALREKDPASTGLLCTEEDGKVSLTAFAGERAVGEFGLDAGKLVREAAAFVRGGGGGKPEFATAGGKDPEGIQKAFDSFAASVREKVSAK</sequence>
<reference key="1">
    <citation type="submission" date="2006-12" db="EMBL/GenBank/DDBJ databases">
        <title>Complete sequence of Chlorobium phaeobacteroides DSM 266.</title>
        <authorList>
            <consortium name="US DOE Joint Genome Institute"/>
            <person name="Copeland A."/>
            <person name="Lucas S."/>
            <person name="Lapidus A."/>
            <person name="Barry K."/>
            <person name="Detter J.C."/>
            <person name="Glavina del Rio T."/>
            <person name="Hammon N."/>
            <person name="Israni S."/>
            <person name="Pitluck S."/>
            <person name="Goltsman E."/>
            <person name="Schmutz J."/>
            <person name="Larimer F."/>
            <person name="Land M."/>
            <person name="Hauser L."/>
            <person name="Mikhailova N."/>
            <person name="Li T."/>
            <person name="Overmann J."/>
            <person name="Bryant D.A."/>
            <person name="Richardson P."/>
        </authorList>
    </citation>
    <scope>NUCLEOTIDE SEQUENCE [LARGE SCALE GENOMIC DNA]</scope>
    <source>
        <strain>DSM 266 / SMG 266 / 2430</strain>
    </source>
</reference>